<sequence>MRRGPRVALVLGLLRIYLAQANFAPHFFDNGVGSTNGNMALFSLPEDTPVGSHVYTLNGTDPEGDPISYHISFDPSTRSVFSVDPNFGNITLVEELDREREDEIEAIISISDGLNLVAEKVVILVTDANDEAPRFIQEPYIIRVPENIPAGSSIFKVQAEDKDTGSGGSVTYSLQNLHSSKFSMDRHSGVLRLQAGATLDYEKSRAHYITVIAKDGGGRLRGADMVFSATTTVTINVEDVQDTAPIFVGTPYYGYVYEDTLPGSEVLTVVAIDGDRGKPNHILYRLLNESDGIFEINETSGAISVLQSPALLRREVYELHVQVTEVNSPGSPAAQATVPVTIRIVDLNNHPPTFYGESGPQNKFELSMFEHPPQGEILRGLKITVNDSDQGANAKFNLRLVGPGGIFRVVPQTVLNEAQVTIIVENSAAIDFEKSKLLTFKLLAIEVNTPEKFSSTADIVIQLLDTNDNVPKFTSHYYIARIPENAPGGSNVVAVTAVDPDTGPWGKVHYSIYGTGSDLFLIHPSTGLIYTQPWASLDAEGTSRYNFYVKAEDMDGRYSLAEVFVTLLDVNDHYPQFVQSVQEKTMVLGTPLKIEATDQDAEEPNNLVDYSITRAEPVNVFDIDAHTGEIRLKNSIRSLEALHNITPSGDYSWSLQVQAKDRGSPSFSTTALLKIDITDTERLSRGSMAAFLIQTKDNPMKAVGVLAGVMAIVVAITVLISTATFWRNKKSNKVLPVRRVLRRRPSPAPHTVRIEWLKFRRAKAATKFILKEDSPNENCNNSRVGVMVPPRAPALPPPPKMASSMVAQQTVPTVSGSLTPQPSPQLPTPKTLGGPVQSSLVSELKQKFEKKSLDNKAYI</sequence>
<name>CDHR1_MOUSE</name>
<feature type="signal peptide" evidence="2">
    <location>
        <begin position="1"/>
        <end position="21"/>
    </location>
</feature>
<feature type="chain" id="PRO_0000318499" description="Cadherin-related family member 1">
    <location>
        <begin position="22"/>
        <end position="859"/>
    </location>
</feature>
<feature type="topological domain" description="Extracellular" evidence="2">
    <location>
        <begin position="22"/>
        <end position="701"/>
    </location>
</feature>
<feature type="transmembrane region" description="Helical" evidence="2">
    <location>
        <begin position="702"/>
        <end position="722"/>
    </location>
</feature>
<feature type="topological domain" description="Cytoplasmic" evidence="2">
    <location>
        <begin position="723"/>
        <end position="859"/>
    </location>
</feature>
<feature type="domain" description="Cadherin 1" evidence="3">
    <location>
        <begin position="36"/>
        <end position="135"/>
    </location>
</feature>
<feature type="domain" description="Cadherin 2" evidence="3">
    <location>
        <begin position="136"/>
        <end position="247"/>
    </location>
</feature>
<feature type="domain" description="Cadherin 3" evidence="3">
    <location>
        <begin position="248"/>
        <end position="354"/>
    </location>
</feature>
<feature type="domain" description="Cadherin 4" evidence="3">
    <location>
        <begin position="360"/>
        <end position="473"/>
    </location>
</feature>
<feature type="domain" description="Cadherin 5" evidence="3">
    <location>
        <begin position="474"/>
        <end position="577"/>
    </location>
</feature>
<feature type="domain" description="Cadherin 6" evidence="3">
    <location>
        <begin position="569"/>
        <end position="691"/>
    </location>
</feature>
<feature type="region of interest" description="Disordered" evidence="4">
    <location>
        <begin position="793"/>
        <end position="838"/>
    </location>
</feature>
<feature type="compositionally biased region" description="Polar residues" evidence="4">
    <location>
        <begin position="805"/>
        <end position="816"/>
    </location>
</feature>
<feature type="glycosylation site" description="N-linked (GlcNAc...) asparagine" evidence="2">
    <location>
        <position position="58"/>
    </location>
</feature>
<feature type="glycosylation site" description="N-linked (GlcNAc...) asparagine" evidence="2">
    <location>
        <position position="89"/>
    </location>
</feature>
<feature type="glycosylation site" description="N-linked (GlcNAc...) asparagine" evidence="2">
    <location>
        <position position="288"/>
    </location>
</feature>
<feature type="sequence conflict" description="In Ref. 3; BAC41482." evidence="8" ref="3">
    <location>
        <begin position="578"/>
        <end position="579"/>
    </location>
</feature>
<gene>
    <name type="primary">Cdhr1</name>
    <name type="synonym">Kiaa1775</name>
    <name type="synonym">Pcdh21</name>
    <name type="synonym">Prcad</name>
</gene>
<keyword id="KW-0106">Calcium</keyword>
<keyword id="KW-0130">Cell adhesion</keyword>
<keyword id="KW-1003">Cell membrane</keyword>
<keyword id="KW-0325">Glycoprotein</keyword>
<keyword id="KW-0472">Membrane</keyword>
<keyword id="KW-0675">Receptor</keyword>
<keyword id="KW-1185">Reference proteome</keyword>
<keyword id="KW-0677">Repeat</keyword>
<keyword id="KW-0732">Signal</keyword>
<keyword id="KW-0812">Transmembrane</keyword>
<keyword id="KW-1133">Transmembrane helix</keyword>
<proteinExistence type="evidence at protein level"/>
<comment type="function">
    <text>Potential calcium-dependent cell-adhesion protein. May be required for the structural integrity of the outer segment (OS) of photoreceptor cells.</text>
</comment>
<comment type="subunit">
    <text evidence="1">Interacts with PROM1.</text>
</comment>
<comment type="interaction">
    <interactant intactId="EBI-4395045">
        <id>Q8VHP6</id>
    </interactant>
    <interactant intactId="EBI-3447549">
        <id>O43490</id>
        <label>PROM1</label>
    </interactant>
    <organismsDiffer>true</organismsDiffer>
    <experiments>3</experiments>
</comment>
<comment type="subcellular location">
    <subcellularLocation>
        <location evidence="8">Cell membrane</location>
        <topology evidence="8">Single-pass membrane protein</topology>
    </subcellularLocation>
    <text evidence="5 6">Localized at the junction between the inner and outer segments of rod and cone photoreceptors cells. Confined to the base of the OS. Localized on the edges of nascent evaginating disks on the side of the OS opposite the connecting cilium. Expressed at postnatal day 2 at the apical tip of the rod photoreceptor cells, the site of the developing OS. Colocalized with rhodopsin between postnatal days 2 and 9 at the base of the growing OS region.</text>
</comment>
<comment type="tissue specificity">
    <text evidence="5 6 7">Expressed in cone and rod photoreceptor cells (at protein level). Expressed in photoreceptor cells of the outer nuclear layer of the retina. Expressed in mitral and tufted cells in the olfactory bulb.</text>
</comment>
<comment type="PTM">
    <text>Undergoes proteolytic cleavage; produces a soluble 95 kDa N-terminal fragment and a 25 kDa cell-associated C-terminal fragment.</text>
</comment>
<comment type="disruption phenotype">
    <text evidence="5">Mice have no obvious phenotype but show photoreceptor cell death as early as 1 month of age shortly after completion of retinal development. Its absence severely compromises the structure of OS which are disorganized and fragmented, but the consequences on photoreceptor electrical signaling are very mild. Proteolytic cleavage is partially inhibited in the absence of orderly OS assembly in mouse retinas lacking RDS/peripherin.</text>
</comment>
<comment type="sequence caution" evidence="8">
    <conflict type="miscellaneous discrepancy">
        <sequence resource="EMBL-CDS" id="BAC41482"/>
    </conflict>
    <text>Partially unspliced pre-RNA.</text>
</comment>
<organism>
    <name type="scientific">Mus musculus</name>
    <name type="common">Mouse</name>
    <dbReference type="NCBI Taxonomy" id="10090"/>
    <lineage>
        <taxon>Eukaryota</taxon>
        <taxon>Metazoa</taxon>
        <taxon>Chordata</taxon>
        <taxon>Craniata</taxon>
        <taxon>Vertebrata</taxon>
        <taxon>Euteleostomi</taxon>
        <taxon>Mammalia</taxon>
        <taxon>Eutheria</taxon>
        <taxon>Euarchontoglires</taxon>
        <taxon>Glires</taxon>
        <taxon>Rodentia</taxon>
        <taxon>Myomorpha</taxon>
        <taxon>Muroidea</taxon>
        <taxon>Muridae</taxon>
        <taxon>Murinae</taxon>
        <taxon>Mus</taxon>
        <taxon>Mus</taxon>
    </lineage>
</organism>
<accession>Q8VHP6</accession>
<accession>Q8CFQ4</accession>
<accession>Q8CH99</accession>
<dbReference type="EMBL" id="AF426393">
    <property type="protein sequence ID" value="AAL65140.1"/>
    <property type="molecule type" value="mRNA"/>
</dbReference>
<dbReference type="EMBL" id="BC042454">
    <property type="protein sequence ID" value="AAH42454.2"/>
    <property type="molecule type" value="mRNA"/>
</dbReference>
<dbReference type="EMBL" id="BC058270">
    <property type="protein sequence ID" value="AAH58270.1"/>
    <property type="molecule type" value="mRNA"/>
</dbReference>
<dbReference type="EMBL" id="AB093300">
    <property type="protein sequence ID" value="BAC41482.1"/>
    <property type="status" value="ALT_SEQ"/>
    <property type="molecule type" value="Transcribed_RNA"/>
</dbReference>
<dbReference type="CCDS" id="CCDS26952.1"/>
<dbReference type="RefSeq" id="NP_570948.1">
    <property type="nucleotide sequence ID" value="NM_130878.3"/>
</dbReference>
<dbReference type="SMR" id="Q8VHP6"/>
<dbReference type="CORUM" id="Q8VHP6"/>
<dbReference type="FunCoup" id="Q8VHP6">
    <property type="interactions" value="115"/>
</dbReference>
<dbReference type="IntAct" id="Q8VHP6">
    <property type="interactions" value="1"/>
</dbReference>
<dbReference type="STRING" id="10090.ENSMUSP00000022337"/>
<dbReference type="GlyCosmos" id="Q8VHP6">
    <property type="glycosylation" value="3 sites, No reported glycans"/>
</dbReference>
<dbReference type="GlyGen" id="Q8VHP6">
    <property type="glycosylation" value="4 sites, 2 N-linked glycans (2 sites)"/>
</dbReference>
<dbReference type="iPTMnet" id="Q8VHP6"/>
<dbReference type="PhosphoSitePlus" id="Q8VHP6"/>
<dbReference type="PaxDb" id="10090-ENSMUSP00000022337"/>
<dbReference type="ProteomicsDB" id="280035"/>
<dbReference type="Antibodypedia" id="30037">
    <property type="antibodies" value="67 antibodies from 22 providers"/>
</dbReference>
<dbReference type="DNASU" id="170677"/>
<dbReference type="Ensembl" id="ENSMUST00000022337.11">
    <property type="protein sequence ID" value="ENSMUSP00000022337.10"/>
    <property type="gene ID" value="ENSMUSG00000021803.11"/>
</dbReference>
<dbReference type="GeneID" id="170677"/>
<dbReference type="KEGG" id="mmu:170677"/>
<dbReference type="UCSC" id="uc007tbu.1">
    <property type="organism name" value="mouse"/>
</dbReference>
<dbReference type="AGR" id="MGI:2157782"/>
<dbReference type="CTD" id="92211"/>
<dbReference type="MGI" id="MGI:2157782">
    <property type="gene designation" value="Cdhr1"/>
</dbReference>
<dbReference type="VEuPathDB" id="HostDB:ENSMUSG00000021803"/>
<dbReference type="eggNOG" id="KOG3594">
    <property type="taxonomic scope" value="Eukaryota"/>
</dbReference>
<dbReference type="GeneTree" id="ENSGT00940000155509"/>
<dbReference type="HOGENOM" id="CLU_017357_0_0_1"/>
<dbReference type="InParanoid" id="Q8VHP6"/>
<dbReference type="OMA" id="WRNKRSP"/>
<dbReference type="OrthoDB" id="6510378at2759"/>
<dbReference type="PhylomeDB" id="Q8VHP6"/>
<dbReference type="TreeFam" id="TF332908"/>
<dbReference type="BioGRID-ORCS" id="170677">
    <property type="hits" value="1 hit in 76 CRISPR screens"/>
</dbReference>
<dbReference type="ChiTaRS" id="Cdhr1">
    <property type="organism name" value="mouse"/>
</dbReference>
<dbReference type="PRO" id="PR:Q8VHP6"/>
<dbReference type="Proteomes" id="UP000000589">
    <property type="component" value="Chromosome 14"/>
</dbReference>
<dbReference type="RNAct" id="Q8VHP6">
    <property type="molecule type" value="protein"/>
</dbReference>
<dbReference type="Bgee" id="ENSMUSG00000021803">
    <property type="expression patterns" value="Expressed in pigmented layer of retina and 103 other cell types or tissues"/>
</dbReference>
<dbReference type="GO" id="GO:0042622">
    <property type="term" value="C:photoreceptor outer segment membrane"/>
    <property type="evidence" value="ECO:0000314"/>
    <property type="project" value="BHF-UCL"/>
</dbReference>
<dbReference type="GO" id="GO:0005886">
    <property type="term" value="C:plasma membrane"/>
    <property type="evidence" value="ECO:0000314"/>
    <property type="project" value="MGI"/>
</dbReference>
<dbReference type="GO" id="GO:0005509">
    <property type="term" value="F:calcium ion binding"/>
    <property type="evidence" value="ECO:0007669"/>
    <property type="project" value="InterPro"/>
</dbReference>
<dbReference type="GO" id="GO:0007156">
    <property type="term" value="P:homophilic cell adhesion via plasma membrane adhesion molecules"/>
    <property type="evidence" value="ECO:0007669"/>
    <property type="project" value="InterPro"/>
</dbReference>
<dbReference type="GO" id="GO:0045494">
    <property type="term" value="P:photoreceptor cell maintenance"/>
    <property type="evidence" value="ECO:0000315"/>
    <property type="project" value="MGI"/>
</dbReference>
<dbReference type="GO" id="GO:0008594">
    <property type="term" value="P:photoreceptor cell morphogenesis"/>
    <property type="evidence" value="ECO:0007669"/>
    <property type="project" value="Ensembl"/>
</dbReference>
<dbReference type="GO" id="GO:0035845">
    <property type="term" value="P:photoreceptor cell outer segment organization"/>
    <property type="evidence" value="ECO:0007669"/>
    <property type="project" value="Ensembl"/>
</dbReference>
<dbReference type="CDD" id="cd11304">
    <property type="entry name" value="Cadherin_repeat"/>
    <property type="match status" value="6"/>
</dbReference>
<dbReference type="FunFam" id="2.60.40.60:FF:000111">
    <property type="entry name" value="Cadherin-related family member 1"/>
    <property type="match status" value="1"/>
</dbReference>
<dbReference type="FunFam" id="2.60.40.60:FF:000113">
    <property type="entry name" value="Cadherin-related family member 1"/>
    <property type="match status" value="1"/>
</dbReference>
<dbReference type="FunFam" id="2.60.40.60:FF:000122">
    <property type="entry name" value="Cadherin-related family member 1"/>
    <property type="match status" value="1"/>
</dbReference>
<dbReference type="FunFam" id="2.60.40.60:FF:000124">
    <property type="entry name" value="Cadherin-related family member 1"/>
    <property type="match status" value="1"/>
</dbReference>
<dbReference type="FunFam" id="2.60.40.60:FF:000126">
    <property type="entry name" value="Cadherin-related family member 1"/>
    <property type="match status" value="1"/>
</dbReference>
<dbReference type="FunFam" id="2.60.40.60:FF:000177">
    <property type="entry name" value="Cadherin-related family member 1"/>
    <property type="match status" value="1"/>
</dbReference>
<dbReference type="Gene3D" id="2.60.40.60">
    <property type="entry name" value="Cadherins"/>
    <property type="match status" value="6"/>
</dbReference>
<dbReference type="InterPro" id="IPR039808">
    <property type="entry name" value="Cadherin"/>
</dbReference>
<dbReference type="InterPro" id="IPR002126">
    <property type="entry name" value="Cadherin-like_dom"/>
</dbReference>
<dbReference type="InterPro" id="IPR015919">
    <property type="entry name" value="Cadherin-like_sf"/>
</dbReference>
<dbReference type="InterPro" id="IPR020894">
    <property type="entry name" value="Cadherin_CS"/>
</dbReference>
<dbReference type="PANTHER" id="PTHR24027:SF438">
    <property type="entry name" value="CADHERIN 23"/>
    <property type="match status" value="1"/>
</dbReference>
<dbReference type="PANTHER" id="PTHR24027">
    <property type="entry name" value="CADHERIN-23"/>
    <property type="match status" value="1"/>
</dbReference>
<dbReference type="Pfam" id="PF00028">
    <property type="entry name" value="Cadherin"/>
    <property type="match status" value="5"/>
</dbReference>
<dbReference type="PRINTS" id="PR00205">
    <property type="entry name" value="CADHERIN"/>
</dbReference>
<dbReference type="SMART" id="SM00112">
    <property type="entry name" value="CA"/>
    <property type="match status" value="6"/>
</dbReference>
<dbReference type="SUPFAM" id="SSF49313">
    <property type="entry name" value="Cadherin-like"/>
    <property type="match status" value="6"/>
</dbReference>
<dbReference type="PROSITE" id="PS00232">
    <property type="entry name" value="CADHERIN_1"/>
    <property type="match status" value="2"/>
</dbReference>
<dbReference type="PROSITE" id="PS50268">
    <property type="entry name" value="CADHERIN_2"/>
    <property type="match status" value="6"/>
</dbReference>
<evidence type="ECO:0000250" key="1"/>
<evidence type="ECO:0000255" key="2"/>
<evidence type="ECO:0000255" key="3">
    <source>
        <dbReference type="PROSITE-ProRule" id="PRU00043"/>
    </source>
</evidence>
<evidence type="ECO:0000256" key="4">
    <source>
        <dbReference type="SAM" id="MobiDB-lite"/>
    </source>
</evidence>
<evidence type="ECO:0000269" key="5">
    <source>
    </source>
</evidence>
<evidence type="ECO:0000269" key="6">
    <source>
    </source>
</evidence>
<evidence type="ECO:0000269" key="7">
    <source>
    </source>
</evidence>
<evidence type="ECO:0000305" key="8"/>
<reference key="1">
    <citation type="journal article" date="2001" name="Neuron">
        <title>A photoreceptor-specific cadherin is essential for the structural integrity of the outer segment and for photoreceptor survival.</title>
        <authorList>
            <person name="Rattner A."/>
            <person name="Smallwood P.M."/>
            <person name="Williams J."/>
            <person name="Cooke C."/>
            <person name="Savchenko A."/>
            <person name="Lyubarsky A."/>
            <person name="Pugh E.N."/>
            <person name="Nathans J."/>
        </authorList>
    </citation>
    <scope>NUCLEOTIDE SEQUENCE [MRNA]</scope>
    <scope>SUBCELLULAR LOCATION</scope>
    <scope>TISSUE SPECIFICITY</scope>
    <scope>DISRUPTION PHENOTYPE</scope>
    <source>
        <strain>129</strain>
    </source>
</reference>
<reference key="2">
    <citation type="journal article" date="2004" name="Genome Res.">
        <title>The status, quality, and expansion of the NIH full-length cDNA project: the Mammalian Gene Collection (MGC).</title>
        <authorList>
            <consortium name="The MGC Project Team"/>
        </authorList>
    </citation>
    <scope>NUCLEOTIDE SEQUENCE [LARGE SCALE MRNA]</scope>
    <source>
        <tissue>Eye</tissue>
    </source>
</reference>
<reference key="3">
    <citation type="submission" date="2005-02" db="EMBL/GenBank/DDBJ databases">
        <title>Prediction of the coding sequences of mouse homologues of KIAA gene. The complete nucleotide sequences of mouse KIAA-homologous cDNAs identified by screening of terminal sequences of cDNA clones randomly sampled from size-fractionated libraries.</title>
        <authorList>
            <person name="Okazaki N."/>
            <person name="Kikuno R.F."/>
            <person name="Ohara R."/>
            <person name="Inamoto S."/>
            <person name="Nagase T."/>
            <person name="Ohara O."/>
            <person name="Koga H."/>
        </authorList>
    </citation>
    <scope>NUCLEOTIDE SEQUENCE [LARGE SCALE MRNA] OF 2-859</scope>
    <source>
        <tissue>Brain</tissue>
    </source>
</reference>
<reference key="4">
    <citation type="journal article" date="2004" name="J. Biol. Chem.">
        <title>Proteolytic shedding of the extracellular domain of photoreceptor cadherin. Implications for outer segment assembly.</title>
        <authorList>
            <person name="Rattner A."/>
            <person name="Chen J."/>
            <person name="Nathans J."/>
        </authorList>
    </citation>
    <scope>SUBCELLULAR LOCATION</scope>
    <scope>TISSUE SPECIFICITY</scope>
</reference>
<reference key="5">
    <citation type="journal article" date="2005" name="Genesis">
        <title>Transgenic expression of Cre recombinase in mitral/tufted cells of the olfactory bulb.</title>
        <authorList>
            <person name="Nagai Y."/>
            <person name="Sano H."/>
            <person name="Yokoi M."/>
        </authorList>
    </citation>
    <scope>TISSUE SPECIFICITY</scope>
</reference>
<protein>
    <recommendedName>
        <fullName>Cadherin-related family member 1</fullName>
    </recommendedName>
    <alternativeName>
        <fullName>Photoreceptor cadherin</fullName>
        <shortName>prCAD</shortName>
    </alternativeName>
    <alternativeName>
        <fullName>Protocadherin-21</fullName>
    </alternativeName>
</protein>